<proteinExistence type="inferred from homology"/>
<organism>
    <name type="scientific">Staphylococcus aureus (strain MRSA252)</name>
    <dbReference type="NCBI Taxonomy" id="282458"/>
    <lineage>
        <taxon>Bacteria</taxon>
        <taxon>Bacillati</taxon>
        <taxon>Bacillota</taxon>
        <taxon>Bacilli</taxon>
        <taxon>Bacillales</taxon>
        <taxon>Staphylococcaceae</taxon>
        <taxon>Staphylococcus</taxon>
    </lineage>
</organism>
<sequence>MASLKNKHFMIGLSLTFIVALFSFLAAKLPILDKVGALTIAILIAILYRHFKGYPEQYSSGITFSSKYLLRFAIILYGLKLNIFDIIGQGSRLLAIDVGVVIFSIVMMLFVNKLLRGDKNIALLLGVGTGVCGAAAIAAVAPIFKSREKDTAISIGIIALIGTIFSLIYTAIYAIFSMTTNVYGAWSGVSLHEIAHVVLAGGFGGSDALKIALLGKLGRVFLLIPLTIVLILIMRFRSSESSSKGRISIPYFLIGFVIMALVNTYVTIPSVLLNILNTVSTICLLMAMVALGLNVAFKDLKNRALKPLMTIIITSICLSSLAFIVVHWLYS</sequence>
<dbReference type="EMBL" id="BX571856">
    <property type="protein sequence ID" value="CAG39361.1"/>
    <property type="molecule type" value="Genomic_DNA"/>
</dbReference>
<dbReference type="RefSeq" id="WP_000157627.1">
    <property type="nucleotide sequence ID" value="NC_002952.2"/>
</dbReference>
<dbReference type="KEGG" id="sar:SAR0338"/>
<dbReference type="HOGENOM" id="CLU_033541_0_1_9"/>
<dbReference type="Proteomes" id="UP000000596">
    <property type="component" value="Chromosome"/>
</dbReference>
<dbReference type="GO" id="GO:0005886">
    <property type="term" value="C:plasma membrane"/>
    <property type="evidence" value="ECO:0007669"/>
    <property type="project" value="UniProtKB-SubCell"/>
</dbReference>
<dbReference type="InterPro" id="IPR018383">
    <property type="entry name" value="UPF0324_pro"/>
</dbReference>
<dbReference type="PANTHER" id="PTHR30106">
    <property type="entry name" value="INNER MEMBRANE PROTEIN YEIH-RELATED"/>
    <property type="match status" value="1"/>
</dbReference>
<dbReference type="PANTHER" id="PTHR30106:SF2">
    <property type="entry name" value="UPF0324 INNER MEMBRANE PROTEIN YEIH"/>
    <property type="match status" value="1"/>
</dbReference>
<dbReference type="Pfam" id="PF03601">
    <property type="entry name" value="Cons_hypoth698"/>
    <property type="match status" value="1"/>
</dbReference>
<comment type="subcellular location">
    <subcellularLocation>
        <location evidence="2">Cell membrane</location>
        <topology evidence="2">Multi-pass membrane protein</topology>
    </subcellularLocation>
</comment>
<comment type="similarity">
    <text evidence="2">Belongs to the UPF0324 family.</text>
</comment>
<evidence type="ECO:0000255" key="1"/>
<evidence type="ECO:0000305" key="2"/>
<gene>
    <name type="ordered locus">SAR0338</name>
</gene>
<keyword id="KW-1003">Cell membrane</keyword>
<keyword id="KW-0472">Membrane</keyword>
<keyword id="KW-0812">Transmembrane</keyword>
<keyword id="KW-1133">Transmembrane helix</keyword>
<accession>Q6GJX7</accession>
<feature type="chain" id="PRO_0000157454" description="UPF0324 membrane protein SAR0338">
    <location>
        <begin position="1"/>
        <end position="331"/>
    </location>
</feature>
<feature type="transmembrane region" description="Helical" evidence="1">
    <location>
        <begin position="9"/>
        <end position="26"/>
    </location>
</feature>
<feature type="transmembrane region" description="Helical" evidence="1">
    <location>
        <begin position="31"/>
        <end position="48"/>
    </location>
</feature>
<feature type="transmembrane region" description="Helical" evidence="1">
    <location>
        <begin position="69"/>
        <end position="88"/>
    </location>
</feature>
<feature type="transmembrane region" description="Helical" evidence="1">
    <location>
        <begin position="93"/>
        <end position="115"/>
    </location>
</feature>
<feature type="transmembrane region" description="Helical" evidence="1">
    <location>
        <begin position="122"/>
        <end position="144"/>
    </location>
</feature>
<feature type="transmembrane region" description="Helical" evidence="1">
    <location>
        <begin position="154"/>
        <end position="176"/>
    </location>
</feature>
<feature type="transmembrane region" description="Helical" evidence="1">
    <location>
        <begin position="183"/>
        <end position="202"/>
    </location>
</feature>
<feature type="transmembrane region" description="Helical" evidence="1">
    <location>
        <begin position="217"/>
        <end position="234"/>
    </location>
</feature>
<feature type="transmembrane region" description="Helical" evidence="1">
    <location>
        <begin position="247"/>
        <end position="269"/>
    </location>
</feature>
<feature type="transmembrane region" description="Helical" evidence="1">
    <location>
        <begin position="273"/>
        <end position="295"/>
    </location>
</feature>
<feature type="transmembrane region" description="Helical" evidence="1">
    <location>
        <begin position="308"/>
        <end position="330"/>
    </location>
</feature>
<protein>
    <recommendedName>
        <fullName>UPF0324 membrane protein SAR0338</fullName>
    </recommendedName>
</protein>
<reference key="1">
    <citation type="journal article" date="2004" name="Proc. Natl. Acad. Sci. U.S.A.">
        <title>Complete genomes of two clinical Staphylococcus aureus strains: evidence for the rapid evolution of virulence and drug resistance.</title>
        <authorList>
            <person name="Holden M.T.G."/>
            <person name="Feil E.J."/>
            <person name="Lindsay J.A."/>
            <person name="Peacock S.J."/>
            <person name="Day N.P.J."/>
            <person name="Enright M.C."/>
            <person name="Foster T.J."/>
            <person name="Moore C.E."/>
            <person name="Hurst L."/>
            <person name="Atkin R."/>
            <person name="Barron A."/>
            <person name="Bason N."/>
            <person name="Bentley S.D."/>
            <person name="Chillingworth C."/>
            <person name="Chillingworth T."/>
            <person name="Churcher C."/>
            <person name="Clark L."/>
            <person name="Corton C."/>
            <person name="Cronin A."/>
            <person name="Doggett J."/>
            <person name="Dowd L."/>
            <person name="Feltwell T."/>
            <person name="Hance Z."/>
            <person name="Harris B."/>
            <person name="Hauser H."/>
            <person name="Holroyd S."/>
            <person name="Jagels K."/>
            <person name="James K.D."/>
            <person name="Lennard N."/>
            <person name="Line A."/>
            <person name="Mayes R."/>
            <person name="Moule S."/>
            <person name="Mungall K."/>
            <person name="Ormond D."/>
            <person name="Quail M.A."/>
            <person name="Rabbinowitsch E."/>
            <person name="Rutherford K.M."/>
            <person name="Sanders M."/>
            <person name="Sharp S."/>
            <person name="Simmonds M."/>
            <person name="Stevens K."/>
            <person name="Whitehead S."/>
            <person name="Barrell B.G."/>
            <person name="Spratt B.G."/>
            <person name="Parkhill J."/>
        </authorList>
    </citation>
    <scope>NUCLEOTIDE SEQUENCE [LARGE SCALE GENOMIC DNA]</scope>
    <source>
        <strain>MRSA252</strain>
    </source>
</reference>
<name>Y338_STAAR</name>